<dbReference type="EC" id="2.7.1.71" evidence="1"/>
<dbReference type="EMBL" id="CP001138">
    <property type="protein sequence ID" value="ACH50672.1"/>
    <property type="molecule type" value="Genomic_DNA"/>
</dbReference>
<dbReference type="RefSeq" id="WP_000983569.1">
    <property type="nucleotide sequence ID" value="NC_011149.1"/>
</dbReference>
<dbReference type="SMR" id="B5EWS0"/>
<dbReference type="KEGG" id="sea:SeAg_B0425"/>
<dbReference type="HOGENOM" id="CLU_057607_4_3_6"/>
<dbReference type="UniPathway" id="UPA00053">
    <property type="reaction ID" value="UER00088"/>
</dbReference>
<dbReference type="Proteomes" id="UP000008819">
    <property type="component" value="Chromosome"/>
</dbReference>
<dbReference type="GO" id="GO:0005829">
    <property type="term" value="C:cytosol"/>
    <property type="evidence" value="ECO:0007669"/>
    <property type="project" value="TreeGrafter"/>
</dbReference>
<dbReference type="GO" id="GO:0005524">
    <property type="term" value="F:ATP binding"/>
    <property type="evidence" value="ECO:0007669"/>
    <property type="project" value="UniProtKB-UniRule"/>
</dbReference>
<dbReference type="GO" id="GO:0000287">
    <property type="term" value="F:magnesium ion binding"/>
    <property type="evidence" value="ECO:0007669"/>
    <property type="project" value="UniProtKB-UniRule"/>
</dbReference>
<dbReference type="GO" id="GO:0004765">
    <property type="term" value="F:shikimate kinase activity"/>
    <property type="evidence" value="ECO:0007669"/>
    <property type="project" value="UniProtKB-UniRule"/>
</dbReference>
<dbReference type="GO" id="GO:0008652">
    <property type="term" value="P:amino acid biosynthetic process"/>
    <property type="evidence" value="ECO:0007669"/>
    <property type="project" value="UniProtKB-KW"/>
</dbReference>
<dbReference type="GO" id="GO:0009073">
    <property type="term" value="P:aromatic amino acid family biosynthetic process"/>
    <property type="evidence" value="ECO:0007669"/>
    <property type="project" value="UniProtKB-KW"/>
</dbReference>
<dbReference type="GO" id="GO:0009423">
    <property type="term" value="P:chorismate biosynthetic process"/>
    <property type="evidence" value="ECO:0007669"/>
    <property type="project" value="UniProtKB-UniRule"/>
</dbReference>
<dbReference type="CDD" id="cd00464">
    <property type="entry name" value="SK"/>
    <property type="match status" value="1"/>
</dbReference>
<dbReference type="FunFam" id="3.40.50.300:FF:000408">
    <property type="entry name" value="Shikimate kinase 2"/>
    <property type="match status" value="1"/>
</dbReference>
<dbReference type="Gene3D" id="3.40.50.300">
    <property type="entry name" value="P-loop containing nucleotide triphosphate hydrolases"/>
    <property type="match status" value="1"/>
</dbReference>
<dbReference type="HAMAP" id="MF_00109">
    <property type="entry name" value="Shikimate_kinase"/>
    <property type="match status" value="1"/>
</dbReference>
<dbReference type="HAMAP" id="MF_01269">
    <property type="entry name" value="Shikimate_kinase_2"/>
    <property type="match status" value="1"/>
</dbReference>
<dbReference type="InterPro" id="IPR027417">
    <property type="entry name" value="P-loop_NTPase"/>
</dbReference>
<dbReference type="InterPro" id="IPR031322">
    <property type="entry name" value="Shikimate/glucono_kinase"/>
</dbReference>
<dbReference type="InterPro" id="IPR000623">
    <property type="entry name" value="Shikimate_kinase/TSH1"/>
</dbReference>
<dbReference type="InterPro" id="IPR027544">
    <property type="entry name" value="Shikimate_kinase_2"/>
</dbReference>
<dbReference type="InterPro" id="IPR023000">
    <property type="entry name" value="Shikimate_kinase_CS"/>
</dbReference>
<dbReference type="NCBIfam" id="NF002988">
    <property type="entry name" value="PRK03731.1"/>
    <property type="match status" value="1"/>
</dbReference>
<dbReference type="PANTHER" id="PTHR21087">
    <property type="entry name" value="SHIKIMATE KINASE"/>
    <property type="match status" value="1"/>
</dbReference>
<dbReference type="PANTHER" id="PTHR21087:SF21">
    <property type="entry name" value="SHIKIMATE KINASE 2"/>
    <property type="match status" value="1"/>
</dbReference>
<dbReference type="Pfam" id="PF01202">
    <property type="entry name" value="SKI"/>
    <property type="match status" value="1"/>
</dbReference>
<dbReference type="PRINTS" id="PR01100">
    <property type="entry name" value="SHIKIMTKNASE"/>
</dbReference>
<dbReference type="SUPFAM" id="SSF52540">
    <property type="entry name" value="P-loop containing nucleoside triphosphate hydrolases"/>
    <property type="match status" value="1"/>
</dbReference>
<dbReference type="PROSITE" id="PS01128">
    <property type="entry name" value="SHIKIMATE_KINASE"/>
    <property type="match status" value="1"/>
</dbReference>
<feature type="chain" id="PRO_1000140137" description="Shikimate kinase 2">
    <location>
        <begin position="1"/>
        <end position="181"/>
    </location>
</feature>
<feature type="region of interest" description="LID domain">
    <location>
        <begin position="112"/>
        <end position="126"/>
    </location>
</feature>
<feature type="binding site" evidence="1">
    <location>
        <begin position="12"/>
        <end position="17"/>
    </location>
    <ligand>
        <name>ATP</name>
        <dbReference type="ChEBI" id="CHEBI:30616"/>
    </ligand>
</feature>
<feature type="binding site" evidence="1">
    <location>
        <position position="16"/>
    </location>
    <ligand>
        <name>Mg(2+)</name>
        <dbReference type="ChEBI" id="CHEBI:18420"/>
    </ligand>
</feature>
<feature type="binding site" evidence="1">
    <location>
        <position position="32"/>
    </location>
    <ligand>
        <name>Mg(2+)</name>
        <dbReference type="ChEBI" id="CHEBI:18420"/>
    </ligand>
</feature>
<feature type="binding site" evidence="1">
    <location>
        <position position="34"/>
    </location>
    <ligand>
        <name>substrate</name>
    </ligand>
</feature>
<feature type="binding site" evidence="1">
    <location>
        <position position="58"/>
    </location>
    <ligand>
        <name>substrate</name>
    </ligand>
</feature>
<feature type="binding site" evidence="1">
    <location>
        <position position="79"/>
    </location>
    <ligand>
        <name>substrate</name>
    </ligand>
</feature>
<feature type="binding site" evidence="1">
    <location>
        <position position="120"/>
    </location>
    <ligand>
        <name>ATP</name>
        <dbReference type="ChEBI" id="CHEBI:30616"/>
    </ligand>
</feature>
<feature type="binding site" evidence="1">
    <location>
        <position position="139"/>
    </location>
    <ligand>
        <name>substrate</name>
    </ligand>
</feature>
<proteinExistence type="inferred from homology"/>
<accession>B5EWS0</accession>
<name>AROL_SALA4</name>
<organism>
    <name type="scientific">Salmonella agona (strain SL483)</name>
    <dbReference type="NCBI Taxonomy" id="454166"/>
    <lineage>
        <taxon>Bacteria</taxon>
        <taxon>Pseudomonadati</taxon>
        <taxon>Pseudomonadota</taxon>
        <taxon>Gammaproteobacteria</taxon>
        <taxon>Enterobacterales</taxon>
        <taxon>Enterobacteriaceae</taxon>
        <taxon>Salmonella</taxon>
    </lineage>
</organism>
<protein>
    <recommendedName>
        <fullName evidence="1">Shikimate kinase 2</fullName>
        <shortName evidence="1">SK 2</shortName>
        <ecNumber evidence="1">2.7.1.71</ecNumber>
    </recommendedName>
</protein>
<sequence>MMQPLYLVGPRGCGKTTIGMALAQATGFRFADTDRWLQSHVQMSVADIVEKEGWGGFRARETAALEAVSAPSTVVATGGGIILTEYNRRYMHRVGVVIYLCAPVSTLVNRLEAEPEADLRPTLTGKPLSEEVREVLEQRDALYRETAHYIIDATKAPAQVVSEIIAALPPSTQRLQGDVYT</sequence>
<gene>
    <name evidence="1" type="primary">aroL</name>
    <name type="ordered locus">SeAg_B0425</name>
</gene>
<comment type="function">
    <text evidence="1">Catalyzes the specific phosphorylation of the 3-hydroxyl group of shikimic acid using ATP as a cosubstrate.</text>
</comment>
<comment type="catalytic activity">
    <reaction evidence="1">
        <text>shikimate + ATP = 3-phosphoshikimate + ADP + H(+)</text>
        <dbReference type="Rhea" id="RHEA:13121"/>
        <dbReference type="ChEBI" id="CHEBI:15378"/>
        <dbReference type="ChEBI" id="CHEBI:30616"/>
        <dbReference type="ChEBI" id="CHEBI:36208"/>
        <dbReference type="ChEBI" id="CHEBI:145989"/>
        <dbReference type="ChEBI" id="CHEBI:456216"/>
        <dbReference type="EC" id="2.7.1.71"/>
    </reaction>
</comment>
<comment type="cofactor">
    <cofactor evidence="1">
        <name>Mg(2+)</name>
        <dbReference type="ChEBI" id="CHEBI:18420"/>
    </cofactor>
    <text evidence="1">Binds 1 Mg(2+) ion per subunit.</text>
</comment>
<comment type="pathway">
    <text evidence="1">Metabolic intermediate biosynthesis; chorismate biosynthesis; chorismate from D-erythrose 4-phosphate and phosphoenolpyruvate: step 5/7.</text>
</comment>
<comment type="subunit">
    <text evidence="1">Monomer.</text>
</comment>
<comment type="subcellular location">
    <subcellularLocation>
        <location evidence="1">Cytoplasm</location>
    </subcellularLocation>
</comment>
<comment type="domain">
    <text evidence="1">The LID domain closes over the active site upon ATP binding.</text>
</comment>
<comment type="similarity">
    <text evidence="1">Belongs to the shikimate kinase family. AroL subfamily.</text>
</comment>
<evidence type="ECO:0000255" key="1">
    <source>
        <dbReference type="HAMAP-Rule" id="MF_01269"/>
    </source>
</evidence>
<reference key="1">
    <citation type="journal article" date="2011" name="J. Bacteriol.">
        <title>Comparative genomics of 28 Salmonella enterica isolates: evidence for CRISPR-mediated adaptive sublineage evolution.</title>
        <authorList>
            <person name="Fricke W.F."/>
            <person name="Mammel M.K."/>
            <person name="McDermott P.F."/>
            <person name="Tartera C."/>
            <person name="White D.G."/>
            <person name="Leclerc J.E."/>
            <person name="Ravel J."/>
            <person name="Cebula T.A."/>
        </authorList>
    </citation>
    <scope>NUCLEOTIDE SEQUENCE [LARGE SCALE GENOMIC DNA]</scope>
    <source>
        <strain>SL483</strain>
    </source>
</reference>
<keyword id="KW-0028">Amino-acid biosynthesis</keyword>
<keyword id="KW-0057">Aromatic amino acid biosynthesis</keyword>
<keyword id="KW-0067">ATP-binding</keyword>
<keyword id="KW-0963">Cytoplasm</keyword>
<keyword id="KW-0418">Kinase</keyword>
<keyword id="KW-0460">Magnesium</keyword>
<keyword id="KW-0479">Metal-binding</keyword>
<keyword id="KW-0547">Nucleotide-binding</keyword>
<keyword id="KW-0808">Transferase</keyword>